<sequence length="125" mass="12962">MFAVIKTGGKQYNVSADDTITVMALPGEKGDAVSFDTVLMFGGEGQSTLGAPFIEGASVVGEIVEQKRGPKVISFKKRRRQNSKRKRGHRQDLTLVRITSLGAGGASPAAAAASSETPAASAPEA</sequence>
<keyword id="KW-1185">Reference proteome</keyword>
<keyword id="KW-0687">Ribonucleoprotein</keyword>
<keyword id="KW-0689">Ribosomal protein</keyword>
<keyword id="KW-0694">RNA-binding</keyword>
<keyword id="KW-0699">rRNA-binding</keyword>
<reference key="1">
    <citation type="journal article" date="2010" name="J. Bacteriol.">
        <title>Complete genome sequence of the aerobic facultative methanotroph Methylocella silvestris BL2.</title>
        <authorList>
            <person name="Chen Y."/>
            <person name="Crombie A."/>
            <person name="Rahman M.T."/>
            <person name="Dedysh S.N."/>
            <person name="Liesack W."/>
            <person name="Stott M.B."/>
            <person name="Alam M."/>
            <person name="Theisen A.R."/>
            <person name="Murrell J.C."/>
            <person name="Dunfield P.F."/>
        </authorList>
    </citation>
    <scope>NUCLEOTIDE SEQUENCE [LARGE SCALE GENOMIC DNA]</scope>
    <source>
        <strain>DSM 15510 / CIP 108128 / LMG 27833 / NCIMB 13906 / BL2</strain>
    </source>
</reference>
<gene>
    <name evidence="1" type="primary">rplU</name>
    <name type="ordered locus">Msil_3283</name>
</gene>
<comment type="function">
    <text evidence="1">This protein binds to 23S rRNA in the presence of protein L20.</text>
</comment>
<comment type="subunit">
    <text evidence="1">Part of the 50S ribosomal subunit. Contacts protein L20.</text>
</comment>
<comment type="similarity">
    <text evidence="1">Belongs to the bacterial ribosomal protein bL21 family.</text>
</comment>
<evidence type="ECO:0000255" key="1">
    <source>
        <dbReference type="HAMAP-Rule" id="MF_01363"/>
    </source>
</evidence>
<evidence type="ECO:0000256" key="2">
    <source>
        <dbReference type="SAM" id="MobiDB-lite"/>
    </source>
</evidence>
<evidence type="ECO:0000305" key="3"/>
<protein>
    <recommendedName>
        <fullName evidence="1">Large ribosomal subunit protein bL21</fullName>
    </recommendedName>
    <alternativeName>
        <fullName evidence="3">50S ribosomal protein L21</fullName>
    </alternativeName>
</protein>
<name>RL21_METSB</name>
<organism>
    <name type="scientific">Methylocella silvestris (strain DSM 15510 / CIP 108128 / LMG 27833 / NCIMB 13906 / BL2)</name>
    <dbReference type="NCBI Taxonomy" id="395965"/>
    <lineage>
        <taxon>Bacteria</taxon>
        <taxon>Pseudomonadati</taxon>
        <taxon>Pseudomonadota</taxon>
        <taxon>Alphaproteobacteria</taxon>
        <taxon>Hyphomicrobiales</taxon>
        <taxon>Beijerinckiaceae</taxon>
        <taxon>Methylocella</taxon>
    </lineage>
</organism>
<feature type="chain" id="PRO_1000166731" description="Large ribosomal subunit protein bL21">
    <location>
        <begin position="1"/>
        <end position="125"/>
    </location>
</feature>
<feature type="region of interest" description="Disordered" evidence="2">
    <location>
        <begin position="75"/>
        <end position="94"/>
    </location>
</feature>
<feature type="region of interest" description="Disordered" evidence="2">
    <location>
        <begin position="103"/>
        <end position="125"/>
    </location>
</feature>
<feature type="compositionally biased region" description="Basic residues" evidence="2">
    <location>
        <begin position="75"/>
        <end position="89"/>
    </location>
</feature>
<feature type="compositionally biased region" description="Low complexity" evidence="2">
    <location>
        <begin position="106"/>
        <end position="125"/>
    </location>
</feature>
<accession>B8EQH7</accession>
<proteinExistence type="inferred from homology"/>
<dbReference type="EMBL" id="CP001280">
    <property type="protein sequence ID" value="ACK52190.1"/>
    <property type="molecule type" value="Genomic_DNA"/>
</dbReference>
<dbReference type="RefSeq" id="WP_012592259.1">
    <property type="nucleotide sequence ID" value="NC_011666.1"/>
</dbReference>
<dbReference type="SMR" id="B8EQH7"/>
<dbReference type="STRING" id="395965.Msil_3283"/>
<dbReference type="KEGG" id="msl:Msil_3283"/>
<dbReference type="eggNOG" id="COG0261">
    <property type="taxonomic scope" value="Bacteria"/>
</dbReference>
<dbReference type="HOGENOM" id="CLU_061463_3_2_5"/>
<dbReference type="OrthoDB" id="9813334at2"/>
<dbReference type="Proteomes" id="UP000002257">
    <property type="component" value="Chromosome"/>
</dbReference>
<dbReference type="GO" id="GO:0005737">
    <property type="term" value="C:cytoplasm"/>
    <property type="evidence" value="ECO:0007669"/>
    <property type="project" value="UniProtKB-ARBA"/>
</dbReference>
<dbReference type="GO" id="GO:1990904">
    <property type="term" value="C:ribonucleoprotein complex"/>
    <property type="evidence" value="ECO:0007669"/>
    <property type="project" value="UniProtKB-KW"/>
</dbReference>
<dbReference type="GO" id="GO:0005840">
    <property type="term" value="C:ribosome"/>
    <property type="evidence" value="ECO:0007669"/>
    <property type="project" value="UniProtKB-KW"/>
</dbReference>
<dbReference type="GO" id="GO:0019843">
    <property type="term" value="F:rRNA binding"/>
    <property type="evidence" value="ECO:0007669"/>
    <property type="project" value="UniProtKB-UniRule"/>
</dbReference>
<dbReference type="GO" id="GO:0003735">
    <property type="term" value="F:structural constituent of ribosome"/>
    <property type="evidence" value="ECO:0007669"/>
    <property type="project" value="InterPro"/>
</dbReference>
<dbReference type="GO" id="GO:0006412">
    <property type="term" value="P:translation"/>
    <property type="evidence" value="ECO:0007669"/>
    <property type="project" value="UniProtKB-UniRule"/>
</dbReference>
<dbReference type="HAMAP" id="MF_01363">
    <property type="entry name" value="Ribosomal_bL21"/>
    <property type="match status" value="1"/>
</dbReference>
<dbReference type="InterPro" id="IPR028909">
    <property type="entry name" value="bL21-like"/>
</dbReference>
<dbReference type="InterPro" id="IPR036164">
    <property type="entry name" value="bL21-like_sf"/>
</dbReference>
<dbReference type="InterPro" id="IPR001787">
    <property type="entry name" value="Ribosomal_bL21"/>
</dbReference>
<dbReference type="NCBIfam" id="TIGR00061">
    <property type="entry name" value="L21"/>
    <property type="match status" value="1"/>
</dbReference>
<dbReference type="PANTHER" id="PTHR21349">
    <property type="entry name" value="50S RIBOSOMAL PROTEIN L21"/>
    <property type="match status" value="1"/>
</dbReference>
<dbReference type="PANTHER" id="PTHR21349:SF0">
    <property type="entry name" value="LARGE RIBOSOMAL SUBUNIT PROTEIN BL21M"/>
    <property type="match status" value="1"/>
</dbReference>
<dbReference type="Pfam" id="PF00829">
    <property type="entry name" value="Ribosomal_L21p"/>
    <property type="match status" value="1"/>
</dbReference>
<dbReference type="SUPFAM" id="SSF141091">
    <property type="entry name" value="L21p-like"/>
    <property type="match status" value="1"/>
</dbReference>